<protein>
    <recommendedName>
        <fullName>Cytochrome c oxidase subunit 7</fullName>
    </recommendedName>
</protein>
<gene>
    <name type="primary">cox7</name>
    <name type="ORF">SPBC2F12.17</name>
</gene>
<keyword id="KW-0002">3D-structure</keyword>
<keyword id="KW-0472">Membrane</keyword>
<keyword id="KW-0496">Mitochondrion</keyword>
<keyword id="KW-0999">Mitochondrion inner membrane</keyword>
<keyword id="KW-0560">Oxidoreductase</keyword>
<keyword id="KW-1185">Reference proteome</keyword>
<keyword id="KW-0812">Transmembrane</keyword>
<keyword id="KW-1133">Transmembrane helix</keyword>
<dbReference type="EMBL" id="CU329671">
    <property type="protein sequence ID" value="CCD31364.1"/>
    <property type="molecule type" value="Genomic_DNA"/>
</dbReference>
<dbReference type="RefSeq" id="XP_004001711.1">
    <property type="nucleotide sequence ID" value="XM_004001662.1"/>
</dbReference>
<dbReference type="PDB" id="8C8Q">
    <property type="method" value="EM"/>
    <property type="resolution" value="3.36 A"/>
    <property type="chains" value="G=1-59"/>
</dbReference>
<dbReference type="PDB" id="8Q1B">
    <property type="method" value="EM"/>
    <property type="resolution" value="3.40 A"/>
    <property type="chains" value="g=1-59"/>
</dbReference>
<dbReference type="PDBsum" id="8C8Q"/>
<dbReference type="PDBsum" id="8Q1B"/>
<dbReference type="EMDB" id="EMD-16491"/>
<dbReference type="EMDB" id="EMD-18062"/>
<dbReference type="SMR" id="G2TRP5"/>
<dbReference type="ComplexPortal" id="CPX-9641">
    <property type="entry name" value="Mitochondrial respiratory chain complex IV"/>
</dbReference>
<dbReference type="FunCoup" id="G2TRP5">
    <property type="interactions" value="67"/>
</dbReference>
<dbReference type="STRING" id="284812.G2TRP5"/>
<dbReference type="iPTMnet" id="G2TRP5"/>
<dbReference type="PaxDb" id="4896-SPBC2F12.17.1"/>
<dbReference type="EnsemblFungi" id="SPBC2F12.17.1">
    <property type="protein sequence ID" value="SPBC2F12.17.1:pep"/>
    <property type="gene ID" value="SPBC2F12.17"/>
</dbReference>
<dbReference type="PomBase" id="SPBC2F12.17">
    <property type="gene designation" value="cox7"/>
</dbReference>
<dbReference type="VEuPathDB" id="FungiDB:SPBC2F12.17"/>
<dbReference type="HOGENOM" id="CLU_2997749_0_0_1"/>
<dbReference type="InParanoid" id="G2TRP5"/>
<dbReference type="OMA" id="YPYYAAM"/>
<dbReference type="UniPathway" id="UPA00705"/>
<dbReference type="PRO" id="PR:G2TRP5"/>
<dbReference type="Proteomes" id="UP000002485">
    <property type="component" value="Chromosome II"/>
</dbReference>
<dbReference type="GO" id="GO:0005743">
    <property type="term" value="C:mitochondrial inner membrane"/>
    <property type="evidence" value="ECO:0000305"/>
    <property type="project" value="PomBase"/>
</dbReference>
<dbReference type="GO" id="GO:0045277">
    <property type="term" value="C:respiratory chain complex IV"/>
    <property type="evidence" value="ECO:0000314"/>
    <property type="project" value="PomBase"/>
</dbReference>
<dbReference type="GO" id="GO:0016491">
    <property type="term" value="F:oxidoreductase activity"/>
    <property type="evidence" value="ECO:0007669"/>
    <property type="project" value="UniProtKB-KW"/>
</dbReference>
<dbReference type="GO" id="GO:0006123">
    <property type="term" value="P:mitochondrial electron transport, cytochrome c to oxygen"/>
    <property type="evidence" value="ECO:0000266"/>
    <property type="project" value="PomBase"/>
</dbReference>
<dbReference type="GO" id="GO:1902600">
    <property type="term" value="P:proton transmembrane transport"/>
    <property type="evidence" value="ECO:0007669"/>
    <property type="project" value="GOC"/>
</dbReference>
<dbReference type="InterPro" id="IPR039297">
    <property type="entry name" value="COX7a"/>
</dbReference>
<dbReference type="Pfam" id="PF02238">
    <property type="entry name" value="COX7a"/>
    <property type="match status" value="1"/>
</dbReference>
<feature type="chain" id="PRO_0000416680" description="Cytochrome c oxidase subunit 7">
    <location>
        <begin position="1"/>
        <end position="59"/>
    </location>
</feature>
<feature type="topological domain" description="Mitochondrial matrix" evidence="1">
    <location>
        <begin position="1"/>
        <end position="24"/>
    </location>
</feature>
<feature type="transmembrane region" description="Helical" evidence="2">
    <location>
        <begin position="25"/>
        <end position="47"/>
    </location>
</feature>
<feature type="topological domain" description="Mitochondrial intermembrane" evidence="1">
    <location>
        <begin position="48"/>
        <end position="59"/>
    </location>
</feature>
<feature type="helix" evidence="4">
    <location>
        <begin position="5"/>
        <end position="11"/>
    </location>
</feature>
<feature type="helix" evidence="4">
    <location>
        <begin position="12"/>
        <end position="14"/>
    </location>
</feature>
<feature type="turn" evidence="4">
    <location>
        <begin position="19"/>
        <end position="21"/>
    </location>
</feature>
<feature type="strand" evidence="4">
    <location>
        <begin position="23"/>
        <end position="25"/>
    </location>
</feature>
<feature type="helix" evidence="4">
    <location>
        <begin position="27"/>
        <end position="29"/>
    </location>
</feature>
<feature type="helix" evidence="4">
    <location>
        <begin position="31"/>
        <end position="52"/>
    </location>
</feature>
<sequence length="59" mass="6734">MKNTIVQQQRFLQSIHKPTYLQRPGSFALVYPYYAVMAGLGLYSLYASGRVIFGKKDAF</sequence>
<name>COX7_SCHPO</name>
<reference key="1">
    <citation type="journal article" date="2002" name="Nature">
        <title>The genome sequence of Schizosaccharomyces pombe.</title>
        <authorList>
            <person name="Wood V."/>
            <person name="Gwilliam R."/>
            <person name="Rajandream M.A."/>
            <person name="Lyne M.H."/>
            <person name="Lyne R."/>
            <person name="Stewart A."/>
            <person name="Sgouros J.G."/>
            <person name="Peat N."/>
            <person name="Hayles J."/>
            <person name="Baker S.G."/>
            <person name="Basham D."/>
            <person name="Bowman S."/>
            <person name="Brooks K."/>
            <person name="Brown D."/>
            <person name="Brown S."/>
            <person name="Chillingworth T."/>
            <person name="Churcher C.M."/>
            <person name="Collins M."/>
            <person name="Connor R."/>
            <person name="Cronin A."/>
            <person name="Davis P."/>
            <person name="Feltwell T."/>
            <person name="Fraser A."/>
            <person name="Gentles S."/>
            <person name="Goble A."/>
            <person name="Hamlin N."/>
            <person name="Harris D.E."/>
            <person name="Hidalgo J."/>
            <person name="Hodgson G."/>
            <person name="Holroyd S."/>
            <person name="Hornsby T."/>
            <person name="Howarth S."/>
            <person name="Huckle E.J."/>
            <person name="Hunt S."/>
            <person name="Jagels K."/>
            <person name="James K.D."/>
            <person name="Jones L."/>
            <person name="Jones M."/>
            <person name="Leather S."/>
            <person name="McDonald S."/>
            <person name="McLean J."/>
            <person name="Mooney P."/>
            <person name="Moule S."/>
            <person name="Mungall K.L."/>
            <person name="Murphy L.D."/>
            <person name="Niblett D."/>
            <person name="Odell C."/>
            <person name="Oliver K."/>
            <person name="O'Neil S."/>
            <person name="Pearson D."/>
            <person name="Quail M.A."/>
            <person name="Rabbinowitsch E."/>
            <person name="Rutherford K.M."/>
            <person name="Rutter S."/>
            <person name="Saunders D."/>
            <person name="Seeger K."/>
            <person name="Sharp S."/>
            <person name="Skelton J."/>
            <person name="Simmonds M.N."/>
            <person name="Squares R."/>
            <person name="Squares S."/>
            <person name="Stevens K."/>
            <person name="Taylor K."/>
            <person name="Taylor R.G."/>
            <person name="Tivey A."/>
            <person name="Walsh S.V."/>
            <person name="Warren T."/>
            <person name="Whitehead S."/>
            <person name="Woodward J.R."/>
            <person name="Volckaert G."/>
            <person name="Aert R."/>
            <person name="Robben J."/>
            <person name="Grymonprez B."/>
            <person name="Weltjens I."/>
            <person name="Vanstreels E."/>
            <person name="Rieger M."/>
            <person name="Schaefer M."/>
            <person name="Mueller-Auer S."/>
            <person name="Gabel C."/>
            <person name="Fuchs M."/>
            <person name="Duesterhoeft A."/>
            <person name="Fritzc C."/>
            <person name="Holzer E."/>
            <person name="Moestl D."/>
            <person name="Hilbert H."/>
            <person name="Borzym K."/>
            <person name="Langer I."/>
            <person name="Beck A."/>
            <person name="Lehrach H."/>
            <person name="Reinhardt R."/>
            <person name="Pohl T.M."/>
            <person name="Eger P."/>
            <person name="Zimmermann W."/>
            <person name="Wedler H."/>
            <person name="Wambutt R."/>
            <person name="Purnelle B."/>
            <person name="Goffeau A."/>
            <person name="Cadieu E."/>
            <person name="Dreano S."/>
            <person name="Gloux S."/>
            <person name="Lelaure V."/>
            <person name="Mottier S."/>
            <person name="Galibert F."/>
            <person name="Aves S.J."/>
            <person name="Xiang Z."/>
            <person name="Hunt C."/>
            <person name="Moore K."/>
            <person name="Hurst S.M."/>
            <person name="Lucas M."/>
            <person name="Rochet M."/>
            <person name="Gaillardin C."/>
            <person name="Tallada V.A."/>
            <person name="Garzon A."/>
            <person name="Thode G."/>
            <person name="Daga R.R."/>
            <person name="Cruzado L."/>
            <person name="Jimenez J."/>
            <person name="Sanchez M."/>
            <person name="del Rey F."/>
            <person name="Benito J."/>
            <person name="Dominguez A."/>
            <person name="Revuelta J.L."/>
            <person name="Moreno S."/>
            <person name="Armstrong J."/>
            <person name="Forsburg S.L."/>
            <person name="Cerutti L."/>
            <person name="Lowe T."/>
            <person name="McCombie W.R."/>
            <person name="Paulsen I."/>
            <person name="Potashkin J."/>
            <person name="Shpakovski G.V."/>
            <person name="Ussery D."/>
            <person name="Barrell B.G."/>
            <person name="Nurse P."/>
        </authorList>
    </citation>
    <scope>NUCLEOTIDE SEQUENCE [LARGE SCALE GENOMIC DNA]</scope>
    <source>
        <strain>972 / ATCC 24843</strain>
    </source>
</reference>
<reference key="2">
    <citation type="journal article" date="2011" name="Science">
        <title>Comparative functional genomics of the fission yeasts.</title>
        <authorList>
            <person name="Rhind N."/>
            <person name="Chen Z."/>
            <person name="Yassour M."/>
            <person name="Thompson D.A."/>
            <person name="Haas B.J."/>
            <person name="Habib N."/>
            <person name="Wapinski I."/>
            <person name="Roy S."/>
            <person name="Lin M.F."/>
            <person name="Heiman D.I."/>
            <person name="Young S.K."/>
            <person name="Furuya K."/>
            <person name="Guo Y."/>
            <person name="Pidoux A."/>
            <person name="Chen H.M."/>
            <person name="Robbertse B."/>
            <person name="Goldberg J.M."/>
            <person name="Aoki K."/>
            <person name="Bayne E.H."/>
            <person name="Berlin A.M."/>
            <person name="Desjardins C.A."/>
            <person name="Dobbs E."/>
            <person name="Dukaj L."/>
            <person name="Fan L."/>
            <person name="FitzGerald M.G."/>
            <person name="French C."/>
            <person name="Gujja S."/>
            <person name="Hansen K."/>
            <person name="Keifenheim D."/>
            <person name="Levin J.Z."/>
            <person name="Mosher R.A."/>
            <person name="Mueller C.A."/>
            <person name="Pfiffner J."/>
            <person name="Priest M."/>
            <person name="Russ C."/>
            <person name="Smialowska A."/>
            <person name="Swoboda P."/>
            <person name="Sykes S.M."/>
            <person name="Vaughn M."/>
            <person name="Vengrova S."/>
            <person name="Yoder R."/>
            <person name="Zeng Q."/>
            <person name="Allshire R."/>
            <person name="Baulcombe D."/>
            <person name="Birren B.W."/>
            <person name="Brown W."/>
            <person name="Ekwall K."/>
            <person name="Kellis M."/>
            <person name="Leatherwood J."/>
            <person name="Levin H."/>
            <person name="Margalit H."/>
            <person name="Martienssen R."/>
            <person name="Nieduszynski C.A."/>
            <person name="Spatafora J.W."/>
            <person name="Friedman N."/>
            <person name="Dalgaard J.Z."/>
            <person name="Baumann P."/>
            <person name="Niki H."/>
            <person name="Regev A."/>
            <person name="Nusbaum C."/>
        </authorList>
    </citation>
    <scope>IDENTIFICATION</scope>
</reference>
<organism>
    <name type="scientific">Schizosaccharomyces pombe (strain 972 / ATCC 24843)</name>
    <name type="common">Fission yeast</name>
    <dbReference type="NCBI Taxonomy" id="284812"/>
    <lineage>
        <taxon>Eukaryota</taxon>
        <taxon>Fungi</taxon>
        <taxon>Dikarya</taxon>
        <taxon>Ascomycota</taxon>
        <taxon>Taphrinomycotina</taxon>
        <taxon>Schizosaccharomycetes</taxon>
        <taxon>Schizosaccharomycetales</taxon>
        <taxon>Schizosaccharomycetaceae</taxon>
        <taxon>Schizosaccharomyces</taxon>
    </lineage>
</organism>
<proteinExistence type="evidence at protein level"/>
<evidence type="ECO:0000250" key="1">
    <source>
        <dbReference type="UniProtKB" id="P10174"/>
    </source>
</evidence>
<evidence type="ECO:0000255" key="2"/>
<evidence type="ECO:0000305" key="3"/>
<evidence type="ECO:0007829" key="4">
    <source>
        <dbReference type="PDB" id="8C8Q"/>
    </source>
</evidence>
<comment type="function">
    <text evidence="1">Component of the cytochrome c oxidase, the last enzyme in the mitochondrial electron transport chain which drives oxidative phosphorylation. The respiratory chain contains 3 multisubunit complexes succinate dehydrogenase (complex II, CII), ubiquinol-cytochrome c oxidoreductase (cytochrome b-c1 complex, complex III, CIII) and cytochrome c oxidase (complex IV, CIV), that cooperate to transfer electrons derived from NADH and succinate to molecular oxygen, creating an electrochemical gradient over the inner membrane that drives transmembrane transport and the ATP synthase. Cytochrome c oxidase is the component of the respiratory chain that catalyzes the reduction of oxygen to water. Electrons originating from reduced cytochrome c in the intermembrane space (IMS) are transferred via the dinuclear copper A center (CU(A)) of subunit 2 and heme A of subunit 1 to the active site in subunit 1, a binuclear center (BNC) formed by heme A3 and copper B (CU(B)). The BNC reduces molecular oxygen to 2 water molecules using 4 electrons from cytochrome c in the IMS and 4 protons from the mitochondrial matrix.</text>
</comment>
<comment type="pathway">
    <text evidence="1">Energy metabolism; oxidative phosphorylation.</text>
</comment>
<comment type="subunit">
    <text evidence="1">Component of the cytochrome c oxidase (complex IV, CIV), a multisubunit enzyme composed of a catalytic core of 3 subunits and several supernumerary subunits. The complex exists as a monomer or a dimer and forms supercomplexes (SCs) in the inner mitochondrial membrane with ubiquinol-cytochrome c oxidoreductase (cytochrome b-c1 complex, complex III, CIII).</text>
</comment>
<comment type="subcellular location">
    <subcellularLocation>
        <location evidence="1">Mitochondrion inner membrane</location>
        <topology evidence="1">Single-pass membrane protein</topology>
    </subcellularLocation>
</comment>
<comment type="similarity">
    <text evidence="3">Belongs to the cytochrome c oxidase subunit 7 family.</text>
</comment>
<accession>G2TRP5</accession>